<accession>Q9ZZW1</accession>
<feature type="chain" id="PRO_0000299685" description="Putative uncharacterized protein Q0182, mitochondrial">
    <location>
        <begin position="1"/>
        <end position="134"/>
    </location>
</feature>
<comment type="subcellular location">
    <subcellularLocation>
        <location evidence="1">Mitochondrion</location>
    </subcellularLocation>
</comment>
<comment type="caution">
    <text evidence="1">Product of a dubious gene prediction.</text>
</comment>
<name>Q0182_YEAST</name>
<geneLocation type="mitochondrion"/>
<organism>
    <name type="scientific">Saccharomyces cerevisiae (strain ATCC 204508 / S288c)</name>
    <name type="common">Baker's yeast</name>
    <dbReference type="NCBI Taxonomy" id="559292"/>
    <lineage>
        <taxon>Eukaryota</taxon>
        <taxon>Fungi</taxon>
        <taxon>Dikarya</taxon>
        <taxon>Ascomycota</taxon>
        <taxon>Saccharomycotina</taxon>
        <taxon>Saccharomycetes</taxon>
        <taxon>Saccharomycetales</taxon>
        <taxon>Saccharomycetaceae</taxon>
        <taxon>Saccharomyces</taxon>
    </lineage>
</organism>
<gene>
    <name type="ordered locus">Q0182</name>
    <name type="ORF">ORF11</name>
</gene>
<sequence length="134" mass="16269">MVSGPGHGSRNPERSFIINMKRVRMMMNSFNLFLMKYNFKMVFMVRPAPRGGADPEGVRSGINYNNYINIIIIYYIMMYLFMFYNINNYFMFNKYNMYIIFFNNYTINSYFGGIGRHDTTKMYYFTVWRFKSFK</sequence>
<proteinExistence type="uncertain"/>
<reference key="1">
    <citation type="journal article" date="1998" name="FEBS Lett.">
        <title>The complete sequence of the mitochondrial genome of Saccharomyces cerevisiae.</title>
        <authorList>
            <person name="Foury F."/>
            <person name="Roganti T."/>
            <person name="Lecrenier N."/>
            <person name="Purnelle B."/>
        </authorList>
    </citation>
    <scope>NUCLEOTIDE SEQUENCE [LARGE SCALE GENOMIC DNA]</scope>
    <source>
        <strain>ATCC 96604 / S288c / FY1679</strain>
    </source>
</reference>
<reference key="2">
    <citation type="journal article" date="2014" name="G3 (Bethesda)">
        <title>The reference genome sequence of Saccharomyces cerevisiae: Then and now.</title>
        <authorList>
            <person name="Engel S.R."/>
            <person name="Dietrich F.S."/>
            <person name="Fisk D.G."/>
            <person name="Binkley G."/>
            <person name="Balakrishnan R."/>
            <person name="Costanzo M.C."/>
            <person name="Dwight S.S."/>
            <person name="Hitz B.C."/>
            <person name="Karra K."/>
            <person name="Nash R.S."/>
            <person name="Weng S."/>
            <person name="Wong E.D."/>
            <person name="Lloyd P."/>
            <person name="Skrzypek M.S."/>
            <person name="Miyasato S.R."/>
            <person name="Simison M."/>
            <person name="Cherry J.M."/>
        </authorList>
    </citation>
    <scope>GENOME REANNOTATION</scope>
    <source>
        <strain>ATCC 96604 / S288c / FY1679</strain>
    </source>
</reference>
<evidence type="ECO:0000305" key="1"/>
<keyword id="KW-0496">Mitochondrion</keyword>
<keyword id="KW-1185">Reference proteome</keyword>
<dbReference type="EMBL" id="KP263414">
    <property type="status" value="NOT_ANNOTATED_CDS"/>
    <property type="molecule type" value="Genomic_DNA"/>
</dbReference>
<dbReference type="PIR" id="S78680">
    <property type="entry name" value="S78680"/>
</dbReference>
<dbReference type="STRING" id="4932.Q0182"/>
<dbReference type="PaxDb" id="4932-Q0182"/>
<dbReference type="EnsemblFungi" id="Q0182_mRNA">
    <property type="protein sequence ID" value="Q0182"/>
    <property type="gene ID" value="Q0182"/>
</dbReference>
<dbReference type="AGR" id="SGD:S000007280"/>
<dbReference type="SGD" id="S000007280">
    <property type="gene designation" value="Q0182"/>
</dbReference>
<dbReference type="HOGENOM" id="CLU_1897844_0_0_1"/>
<dbReference type="InParanoid" id="Q9ZZW1"/>
<dbReference type="Proteomes" id="UP000002311">
    <property type="component" value="Mitochondrion"/>
</dbReference>
<dbReference type="RNAct" id="Q9ZZW1">
    <property type="molecule type" value="protein"/>
</dbReference>
<dbReference type="GO" id="GO:0005739">
    <property type="term" value="C:mitochondrion"/>
    <property type="evidence" value="ECO:0007669"/>
    <property type="project" value="UniProtKB-SubCell"/>
</dbReference>
<protein>
    <recommendedName>
        <fullName>Putative uncharacterized protein Q0182, mitochondrial</fullName>
    </recommendedName>
</protein>